<evidence type="ECO:0000305" key="1"/>
<gene>
    <name type="primary">ycf40</name>
</gene>
<sequence>MIHSNISIQINGEPFNCSKPISLQFLLNYLDFNSERVAVELNDILLPETLFHSTYLNDQDKLEVITIVGGG</sequence>
<accession>Q1XDE3</accession>
<proteinExistence type="inferred from homology"/>
<name>YCF40_PYRYE</name>
<organism>
    <name type="scientific">Pyropia yezoensis</name>
    <name type="common">Susabi-nori</name>
    <name type="synonym">Porphyra yezoensis</name>
    <dbReference type="NCBI Taxonomy" id="2788"/>
    <lineage>
        <taxon>Eukaryota</taxon>
        <taxon>Rhodophyta</taxon>
        <taxon>Bangiophyceae</taxon>
        <taxon>Bangiales</taxon>
        <taxon>Bangiaceae</taxon>
        <taxon>Pyropia</taxon>
    </lineage>
</organism>
<protein>
    <recommendedName>
        <fullName>Uncharacterized protein ycf40</fullName>
    </recommendedName>
</protein>
<feature type="chain" id="PRO_0000277277" description="Uncharacterized protein ycf40">
    <location>
        <begin position="1"/>
        <end position="71"/>
    </location>
</feature>
<comment type="subcellular location">
    <subcellularLocation>
        <location>Plastid</location>
        <location>Chloroplast</location>
    </subcellularLocation>
</comment>
<comment type="similarity">
    <text evidence="1">Belongs to the ycf40 family.</text>
</comment>
<keyword id="KW-0150">Chloroplast</keyword>
<keyword id="KW-0934">Plastid</keyword>
<geneLocation type="chloroplast"/>
<dbReference type="EMBL" id="AP006715">
    <property type="protein sequence ID" value="BAE92468.1"/>
    <property type="molecule type" value="Genomic_DNA"/>
</dbReference>
<dbReference type="RefSeq" id="YP_537025.1">
    <property type="nucleotide sequence ID" value="NC_007932.1"/>
</dbReference>
<dbReference type="SMR" id="Q1XDE3"/>
<dbReference type="GO" id="GO:0009507">
    <property type="term" value="C:chloroplast"/>
    <property type="evidence" value="ECO:0007669"/>
    <property type="project" value="UniProtKB-SubCell"/>
</dbReference>
<dbReference type="CDD" id="cd00565">
    <property type="entry name" value="Ubl_ThiS"/>
    <property type="match status" value="1"/>
</dbReference>
<dbReference type="Gene3D" id="3.10.20.30">
    <property type="match status" value="1"/>
</dbReference>
<dbReference type="InterPro" id="IPR012675">
    <property type="entry name" value="Beta-grasp_dom_sf"/>
</dbReference>
<dbReference type="InterPro" id="IPR016155">
    <property type="entry name" value="Mopterin_synth/thiamin_S_b"/>
</dbReference>
<dbReference type="InterPro" id="IPR010035">
    <property type="entry name" value="Thi_S"/>
</dbReference>
<dbReference type="InterPro" id="IPR003749">
    <property type="entry name" value="ThiS/MoaD-like"/>
</dbReference>
<dbReference type="NCBIfam" id="TIGR01683">
    <property type="entry name" value="thiS"/>
    <property type="match status" value="1"/>
</dbReference>
<dbReference type="PANTHER" id="PTHR34472">
    <property type="entry name" value="SULFUR CARRIER PROTEIN THIS"/>
    <property type="match status" value="1"/>
</dbReference>
<dbReference type="PANTHER" id="PTHR34472:SF1">
    <property type="entry name" value="SULFUR CARRIER PROTEIN THIS"/>
    <property type="match status" value="1"/>
</dbReference>
<dbReference type="Pfam" id="PF02597">
    <property type="entry name" value="ThiS"/>
    <property type="match status" value="1"/>
</dbReference>
<dbReference type="SUPFAM" id="SSF54285">
    <property type="entry name" value="MoaD/ThiS"/>
    <property type="match status" value="1"/>
</dbReference>
<reference key="1">
    <citation type="submission" date="2003-11" db="EMBL/GenBank/DDBJ databases">
        <title>Whole genome sequence of Porphyra yezoensis chloroplast.</title>
        <authorList>
            <person name="Kunimoto M."/>
            <person name="Morishima K."/>
            <person name="Yoshikawa M."/>
            <person name="Fukuda S."/>
            <person name="Kobayashi T."/>
            <person name="Kobayashi M."/>
            <person name="Okazaki T."/>
            <person name="Ohara I."/>
            <person name="Nakayama I."/>
        </authorList>
    </citation>
    <scope>NUCLEOTIDE SEQUENCE [LARGE SCALE GENOMIC DNA]</scope>
    <source>
        <strain>U-51</strain>
    </source>
</reference>